<dbReference type="EC" id="2.3.1.181" evidence="1"/>
<dbReference type="EMBL" id="CT971583">
    <property type="protein sequence ID" value="CAK23005.1"/>
    <property type="molecule type" value="Genomic_DNA"/>
</dbReference>
<dbReference type="SMR" id="A5GJ90"/>
<dbReference type="STRING" id="32051.SynWH7803_0579"/>
<dbReference type="KEGG" id="syx:SynWH7803_0579"/>
<dbReference type="eggNOG" id="COG0321">
    <property type="taxonomic scope" value="Bacteria"/>
</dbReference>
<dbReference type="HOGENOM" id="CLU_035168_1_0_3"/>
<dbReference type="OrthoDB" id="9787061at2"/>
<dbReference type="UniPathway" id="UPA00538">
    <property type="reaction ID" value="UER00592"/>
</dbReference>
<dbReference type="Proteomes" id="UP000001566">
    <property type="component" value="Chromosome"/>
</dbReference>
<dbReference type="GO" id="GO:0005737">
    <property type="term" value="C:cytoplasm"/>
    <property type="evidence" value="ECO:0007669"/>
    <property type="project" value="UniProtKB-SubCell"/>
</dbReference>
<dbReference type="GO" id="GO:0033819">
    <property type="term" value="F:lipoyl(octanoyl) transferase activity"/>
    <property type="evidence" value="ECO:0007669"/>
    <property type="project" value="UniProtKB-EC"/>
</dbReference>
<dbReference type="GO" id="GO:0036211">
    <property type="term" value="P:protein modification process"/>
    <property type="evidence" value="ECO:0007669"/>
    <property type="project" value="InterPro"/>
</dbReference>
<dbReference type="CDD" id="cd16444">
    <property type="entry name" value="LipB"/>
    <property type="match status" value="1"/>
</dbReference>
<dbReference type="Gene3D" id="3.30.930.10">
    <property type="entry name" value="Bira Bifunctional Protein, Domain 2"/>
    <property type="match status" value="1"/>
</dbReference>
<dbReference type="HAMAP" id="MF_00013">
    <property type="entry name" value="LipB"/>
    <property type="match status" value="1"/>
</dbReference>
<dbReference type="InterPro" id="IPR045864">
    <property type="entry name" value="aa-tRNA-synth_II/BPL/LPL"/>
</dbReference>
<dbReference type="InterPro" id="IPR004143">
    <property type="entry name" value="BPL_LPL_catalytic"/>
</dbReference>
<dbReference type="InterPro" id="IPR000544">
    <property type="entry name" value="Octanoyltransferase"/>
</dbReference>
<dbReference type="InterPro" id="IPR020605">
    <property type="entry name" value="Octanoyltransferase_CS"/>
</dbReference>
<dbReference type="NCBIfam" id="TIGR00214">
    <property type="entry name" value="lipB"/>
    <property type="match status" value="1"/>
</dbReference>
<dbReference type="PANTHER" id="PTHR10993:SF7">
    <property type="entry name" value="LIPOYLTRANSFERASE 2, MITOCHONDRIAL-RELATED"/>
    <property type="match status" value="1"/>
</dbReference>
<dbReference type="PANTHER" id="PTHR10993">
    <property type="entry name" value="OCTANOYLTRANSFERASE"/>
    <property type="match status" value="1"/>
</dbReference>
<dbReference type="Pfam" id="PF21948">
    <property type="entry name" value="LplA-B_cat"/>
    <property type="match status" value="1"/>
</dbReference>
<dbReference type="SUPFAM" id="SSF55681">
    <property type="entry name" value="Class II aaRS and biotin synthetases"/>
    <property type="match status" value="1"/>
</dbReference>
<dbReference type="PROSITE" id="PS51733">
    <property type="entry name" value="BPL_LPL_CATALYTIC"/>
    <property type="match status" value="1"/>
</dbReference>
<dbReference type="PROSITE" id="PS01313">
    <property type="entry name" value="LIPB"/>
    <property type="match status" value="1"/>
</dbReference>
<accession>A5GJ90</accession>
<name>LIPB_SYNPW</name>
<sequence length="246" mass="26907">MPRPIGNLETTTDSGTGSAAFLFQPAHLVPFVQAWTWQRLWQERLLKGADSGGDPPPEAVWLLQHPPCYTLGRGASEDHLLFDPEHPPAPLHRIDRGGEVTHHAPGQLVIYPVLDLHRHRTDLHWYLRQLEQVVIDVLAALGLRGERIEGLTGVWLDQCKVAAIGVGCRRWITQHGVALNVNCALEGFESVVPCGLAGRAVGCLSDWCPGLHVSEVQPLVCDALAARFGLCLEPNADAAIAEGRCW</sequence>
<protein>
    <recommendedName>
        <fullName evidence="1">Octanoyltransferase</fullName>
        <ecNumber evidence="1">2.3.1.181</ecNumber>
    </recommendedName>
    <alternativeName>
        <fullName evidence="1">Lipoate-protein ligase B</fullName>
    </alternativeName>
    <alternativeName>
        <fullName evidence="1">Lipoyl/octanoyl transferase</fullName>
    </alternativeName>
    <alternativeName>
        <fullName evidence="1">Octanoyl-[acyl-carrier-protein]-protein N-octanoyltransferase</fullName>
    </alternativeName>
</protein>
<evidence type="ECO:0000255" key="1">
    <source>
        <dbReference type="HAMAP-Rule" id="MF_00013"/>
    </source>
</evidence>
<evidence type="ECO:0000255" key="2">
    <source>
        <dbReference type="PROSITE-ProRule" id="PRU01067"/>
    </source>
</evidence>
<feature type="chain" id="PRO_1000001140" description="Octanoyltransferase">
    <location>
        <begin position="1"/>
        <end position="246"/>
    </location>
</feature>
<feature type="domain" description="BPL/LPL catalytic" evidence="2">
    <location>
        <begin position="54"/>
        <end position="240"/>
    </location>
</feature>
<feature type="active site" description="Acyl-thioester intermediate" evidence="1">
    <location>
        <position position="194"/>
    </location>
</feature>
<feature type="binding site" evidence="1">
    <location>
        <begin position="96"/>
        <end position="103"/>
    </location>
    <ligand>
        <name>substrate</name>
    </ligand>
</feature>
<feature type="binding site" evidence="1">
    <location>
        <begin position="163"/>
        <end position="165"/>
    </location>
    <ligand>
        <name>substrate</name>
    </ligand>
</feature>
<feature type="binding site" evidence="1">
    <location>
        <begin position="176"/>
        <end position="178"/>
    </location>
    <ligand>
        <name>substrate</name>
    </ligand>
</feature>
<feature type="site" description="Lowers pKa of active site Cys" evidence="1">
    <location>
        <position position="160"/>
    </location>
</feature>
<comment type="function">
    <text evidence="1">Catalyzes the transfer of endogenously produced octanoic acid from octanoyl-acyl-carrier-protein onto the lipoyl domains of lipoate-dependent enzymes. Lipoyl-ACP can also act as a substrate although octanoyl-ACP is likely to be the physiological substrate.</text>
</comment>
<comment type="catalytic activity">
    <reaction evidence="1">
        <text>octanoyl-[ACP] + L-lysyl-[protein] = N(6)-octanoyl-L-lysyl-[protein] + holo-[ACP] + H(+)</text>
        <dbReference type="Rhea" id="RHEA:17665"/>
        <dbReference type="Rhea" id="RHEA-COMP:9636"/>
        <dbReference type="Rhea" id="RHEA-COMP:9685"/>
        <dbReference type="Rhea" id="RHEA-COMP:9752"/>
        <dbReference type="Rhea" id="RHEA-COMP:9928"/>
        <dbReference type="ChEBI" id="CHEBI:15378"/>
        <dbReference type="ChEBI" id="CHEBI:29969"/>
        <dbReference type="ChEBI" id="CHEBI:64479"/>
        <dbReference type="ChEBI" id="CHEBI:78463"/>
        <dbReference type="ChEBI" id="CHEBI:78809"/>
        <dbReference type="EC" id="2.3.1.181"/>
    </reaction>
</comment>
<comment type="pathway">
    <text evidence="1">Protein modification; protein lipoylation via endogenous pathway; protein N(6)-(lipoyl)lysine from octanoyl-[acyl-carrier-protein]: step 1/2.</text>
</comment>
<comment type="subcellular location">
    <subcellularLocation>
        <location evidence="1">Cytoplasm</location>
    </subcellularLocation>
</comment>
<comment type="miscellaneous">
    <text evidence="1">In the reaction, the free carboxyl group of octanoic acid is attached via an amide linkage to the epsilon-amino group of a specific lysine residue of lipoyl domains of lipoate-dependent enzymes.</text>
</comment>
<comment type="similarity">
    <text evidence="1">Belongs to the LipB family.</text>
</comment>
<reference key="1">
    <citation type="submission" date="2006-05" db="EMBL/GenBank/DDBJ databases">
        <authorList>
            <consortium name="Genoscope"/>
        </authorList>
    </citation>
    <scope>NUCLEOTIDE SEQUENCE [LARGE SCALE GENOMIC DNA]</scope>
    <source>
        <strain>WH7803</strain>
    </source>
</reference>
<keyword id="KW-0012">Acyltransferase</keyword>
<keyword id="KW-0963">Cytoplasm</keyword>
<keyword id="KW-1185">Reference proteome</keyword>
<keyword id="KW-0808">Transferase</keyword>
<organism>
    <name type="scientific">Synechococcus sp. (strain WH7803)</name>
    <dbReference type="NCBI Taxonomy" id="32051"/>
    <lineage>
        <taxon>Bacteria</taxon>
        <taxon>Bacillati</taxon>
        <taxon>Cyanobacteriota</taxon>
        <taxon>Cyanophyceae</taxon>
        <taxon>Synechococcales</taxon>
        <taxon>Synechococcaceae</taxon>
        <taxon>Synechococcus</taxon>
    </lineage>
</organism>
<gene>
    <name evidence="1" type="primary">lipB</name>
    <name type="ordered locus">SynWH7803_0579</name>
</gene>
<proteinExistence type="inferred from homology"/>